<reference key="1">
    <citation type="submission" date="2006-08" db="EMBL/GenBank/DDBJ databases">
        <title>Complete sequence of Shewanella sp. MR-4.</title>
        <authorList>
            <consortium name="US DOE Joint Genome Institute"/>
            <person name="Copeland A."/>
            <person name="Lucas S."/>
            <person name="Lapidus A."/>
            <person name="Barry K."/>
            <person name="Detter J.C."/>
            <person name="Glavina del Rio T."/>
            <person name="Hammon N."/>
            <person name="Israni S."/>
            <person name="Dalin E."/>
            <person name="Tice H."/>
            <person name="Pitluck S."/>
            <person name="Kiss H."/>
            <person name="Brettin T."/>
            <person name="Bruce D."/>
            <person name="Han C."/>
            <person name="Tapia R."/>
            <person name="Gilna P."/>
            <person name="Schmutz J."/>
            <person name="Larimer F."/>
            <person name="Land M."/>
            <person name="Hauser L."/>
            <person name="Kyrpides N."/>
            <person name="Mikhailova N."/>
            <person name="Nealson K."/>
            <person name="Konstantinidis K."/>
            <person name="Klappenbach J."/>
            <person name="Tiedje J."/>
            <person name="Richardson P."/>
        </authorList>
    </citation>
    <scope>NUCLEOTIDE SEQUENCE [LARGE SCALE GENOMIC DNA]</scope>
    <source>
        <strain>MR-4</strain>
    </source>
</reference>
<comment type="similarity">
    <text evidence="1">Belongs to the SfsA family.</text>
</comment>
<evidence type="ECO:0000255" key="1">
    <source>
        <dbReference type="HAMAP-Rule" id="MF_00095"/>
    </source>
</evidence>
<proteinExistence type="inferred from homology"/>
<protein>
    <recommendedName>
        <fullName evidence="1">Sugar fermentation stimulation protein homolog</fullName>
    </recommendedName>
</protein>
<name>SFSA_SHESM</name>
<sequence length="234" mass="25951">MHFSPALKPGKLLKRYKRFLADVQLEDGTEITLHCPNTGSMRNCLFPGETVWFSTSNNPKRKYAHTWELMATPTGGLIGIHSGNANALVEEALNKGIITELTGYDSLSREVKYGDENSRIDILLESAQKPACYIEVKSCTLLEDGQGYFPDAVSLRGQKHLRELMHMASLGHRAVLLFVVQHTDIHSVAPAAHIDPEYANLLKKAILSGVEVLAYRCEISPDEIHLAQSCPVRV</sequence>
<feature type="chain" id="PRO_1000008029" description="Sugar fermentation stimulation protein homolog">
    <location>
        <begin position="1"/>
        <end position="234"/>
    </location>
</feature>
<organism>
    <name type="scientific">Shewanella sp. (strain MR-4)</name>
    <dbReference type="NCBI Taxonomy" id="60480"/>
    <lineage>
        <taxon>Bacteria</taxon>
        <taxon>Pseudomonadati</taxon>
        <taxon>Pseudomonadota</taxon>
        <taxon>Gammaproteobacteria</taxon>
        <taxon>Alteromonadales</taxon>
        <taxon>Shewanellaceae</taxon>
        <taxon>Shewanella</taxon>
    </lineage>
</organism>
<accession>Q0HMA6</accession>
<gene>
    <name evidence="1" type="primary">sfsA</name>
    <name type="ordered locus">Shewmr4_0731</name>
</gene>
<dbReference type="EMBL" id="CP000446">
    <property type="protein sequence ID" value="ABI37811.1"/>
    <property type="molecule type" value="Genomic_DNA"/>
</dbReference>
<dbReference type="RefSeq" id="WP_011621527.1">
    <property type="nucleotide sequence ID" value="NC_008321.1"/>
</dbReference>
<dbReference type="SMR" id="Q0HMA6"/>
<dbReference type="KEGG" id="she:Shewmr4_0731"/>
<dbReference type="HOGENOM" id="CLU_052299_2_0_6"/>
<dbReference type="GO" id="GO:0003677">
    <property type="term" value="F:DNA binding"/>
    <property type="evidence" value="ECO:0007669"/>
    <property type="project" value="InterPro"/>
</dbReference>
<dbReference type="CDD" id="cd22359">
    <property type="entry name" value="SfsA-like_bacterial"/>
    <property type="match status" value="1"/>
</dbReference>
<dbReference type="FunFam" id="2.40.50.580:FF:000001">
    <property type="entry name" value="Sugar fermentation stimulation protein A"/>
    <property type="match status" value="1"/>
</dbReference>
<dbReference type="FunFam" id="3.40.1350.60:FF:000001">
    <property type="entry name" value="Sugar fermentation stimulation protein A"/>
    <property type="match status" value="1"/>
</dbReference>
<dbReference type="Gene3D" id="2.40.50.580">
    <property type="match status" value="1"/>
</dbReference>
<dbReference type="Gene3D" id="3.40.1350.60">
    <property type="match status" value="1"/>
</dbReference>
<dbReference type="HAMAP" id="MF_00095">
    <property type="entry name" value="SfsA"/>
    <property type="match status" value="1"/>
</dbReference>
<dbReference type="InterPro" id="IPR005224">
    <property type="entry name" value="SfsA"/>
</dbReference>
<dbReference type="InterPro" id="IPR040452">
    <property type="entry name" value="SfsA_C"/>
</dbReference>
<dbReference type="InterPro" id="IPR041465">
    <property type="entry name" value="SfsA_N"/>
</dbReference>
<dbReference type="NCBIfam" id="TIGR00230">
    <property type="entry name" value="sfsA"/>
    <property type="match status" value="1"/>
</dbReference>
<dbReference type="PANTHER" id="PTHR30545">
    <property type="entry name" value="SUGAR FERMENTATION STIMULATION PROTEIN A"/>
    <property type="match status" value="1"/>
</dbReference>
<dbReference type="PANTHER" id="PTHR30545:SF2">
    <property type="entry name" value="SUGAR FERMENTATION STIMULATION PROTEIN A"/>
    <property type="match status" value="1"/>
</dbReference>
<dbReference type="Pfam" id="PF03749">
    <property type="entry name" value="SfsA"/>
    <property type="match status" value="1"/>
</dbReference>
<dbReference type="Pfam" id="PF17746">
    <property type="entry name" value="SfsA_N"/>
    <property type="match status" value="1"/>
</dbReference>